<feature type="initiator methionine" description="Removed" evidence="3">
    <location>
        <position position="1"/>
    </location>
</feature>
<feature type="chain" id="PRO_0000419133" description="Histone H1.1">
    <location>
        <begin position="2"/>
        <end position="218"/>
    </location>
</feature>
<feature type="domain" description="H15" evidence="6">
    <location>
        <begin position="39"/>
        <end position="112"/>
    </location>
</feature>
<feature type="region of interest" description="Disordered" evidence="7">
    <location>
        <begin position="1"/>
        <end position="42"/>
    </location>
</feature>
<feature type="region of interest" description="Disordered" evidence="7">
    <location>
        <begin position="116"/>
        <end position="218"/>
    </location>
</feature>
<feature type="compositionally biased region" description="Basic residues" evidence="7">
    <location>
        <begin position="20"/>
        <end position="38"/>
    </location>
</feature>
<feature type="compositionally biased region" description="Low complexity" evidence="7">
    <location>
        <begin position="119"/>
        <end position="149"/>
    </location>
</feature>
<feature type="compositionally biased region" description="Basic residues" evidence="7">
    <location>
        <begin position="150"/>
        <end position="183"/>
    </location>
</feature>
<feature type="compositionally biased region" description="Basic residues" evidence="7">
    <location>
        <begin position="190"/>
        <end position="218"/>
    </location>
</feature>
<feature type="modified residue" description="N-acetylserine" evidence="3">
    <location>
        <position position="2"/>
    </location>
</feature>
<feature type="modified residue" description="Phosphoserine" evidence="2">
    <location>
        <position position="2"/>
    </location>
</feature>
<feature type="modified residue" description="Phosphoserine" evidence="2">
    <location>
        <position position="12"/>
    </location>
</feature>
<feature type="modified residue" description="N6-acetyllysine" evidence="3">
    <location>
        <position position="17"/>
    </location>
</feature>
<feature type="modified residue" description="N6-(beta-hydroxybutyryl)lysine" evidence="4">
    <location>
        <position position="37"/>
    </location>
</feature>
<feature type="modified residue" description="Phosphoserine" evidence="2">
    <location>
        <position position="44"/>
    </location>
</feature>
<feature type="modified residue" description="N6-(beta-hydroxybutyryl)lysine" evidence="4">
    <location>
        <position position="55"/>
    </location>
</feature>
<feature type="modified residue" description="Citrulline" evidence="3">
    <location>
        <position position="57"/>
    </location>
</feature>
<feature type="modified residue" description="N6-(beta-hydroxybutyryl)lysine" evidence="4">
    <location>
        <position position="67"/>
    </location>
</feature>
<feature type="modified residue" description="N6-acetyllysine" evidence="3">
    <location>
        <position position="78"/>
    </location>
</feature>
<feature type="modified residue" description="N6-(beta-hydroxybutyryl)lysine" evidence="4">
    <location>
        <position position="88"/>
    </location>
</feature>
<feature type="modified residue" description="N6-(beta-hydroxybutyryl)lysine; alternate" evidence="4">
    <location>
        <position position="93"/>
    </location>
</feature>
<feature type="modified residue" description="N6-acetyllysine; alternate" evidence="3">
    <location>
        <position position="93"/>
    </location>
</feature>
<feature type="modified residue" description="Phosphoserine; by PKC" evidence="8">
    <location>
        <position position="107"/>
    </location>
</feature>
<feature type="modified residue" description="N6-(beta-hydroxybutyryl)lysine" evidence="4">
    <location>
        <position position="109"/>
    </location>
</feature>
<feature type="modified residue" description="N6-acetyllysine" evidence="3">
    <location>
        <position position="125"/>
    </location>
</feature>
<feature type="modified residue" description="Phosphothreonine" evidence="3">
    <location>
        <position position="206"/>
    </location>
</feature>
<organism>
    <name type="scientific">Bos taurus</name>
    <name type="common">Bovine</name>
    <dbReference type="NCBI Taxonomy" id="9913"/>
    <lineage>
        <taxon>Eukaryota</taxon>
        <taxon>Metazoa</taxon>
        <taxon>Chordata</taxon>
        <taxon>Craniata</taxon>
        <taxon>Vertebrata</taxon>
        <taxon>Euteleostomi</taxon>
        <taxon>Mammalia</taxon>
        <taxon>Eutheria</taxon>
        <taxon>Laurasiatheria</taxon>
        <taxon>Artiodactyla</taxon>
        <taxon>Ruminantia</taxon>
        <taxon>Pecora</taxon>
        <taxon>Bovidae</taxon>
        <taxon>Bovinae</taxon>
        <taxon>Bos</taxon>
    </lineage>
</organism>
<reference key="1">
    <citation type="journal article" date="2009" name="Genome Biol.">
        <title>A whole-genome assembly of the domestic cow, Bos taurus.</title>
        <authorList>
            <person name="Zimin A.V."/>
            <person name="Delcher A.L."/>
            <person name="Florea L."/>
            <person name="Kelley D.R."/>
            <person name="Schatz M.C."/>
            <person name="Puiu D."/>
            <person name="Hanrahan F."/>
            <person name="Pertea G."/>
            <person name="Van Tassell C.P."/>
            <person name="Sonstegard T.S."/>
            <person name="Marcais G."/>
            <person name="Roberts M."/>
            <person name="Subramanian P."/>
            <person name="Yorke J.A."/>
            <person name="Salzberg S.L."/>
        </authorList>
    </citation>
    <scope>NUCLEOTIDE SEQUENCE [LARGE SCALE GENOMIC DNA]</scope>
    <source>
        <strain>Hereford</strain>
    </source>
</reference>
<reference key="2">
    <citation type="journal article" date="1988" name="FEBS Lett.">
        <title>Identification of the phosphoserine residue in histone H1 phosphorylated by protein kinase C.</title>
        <authorList>
            <person name="Jakes S."/>
            <person name="Hastings T.G."/>
            <person name="Reimann E.M."/>
            <person name="Schlender K.K."/>
        </authorList>
    </citation>
    <scope>PHOSPHORYLATION AT SER-107</scope>
</reference>
<reference key="3">
    <citation type="journal article" date="1994" name="Protein Sci.">
        <title>A proposal for a coherent mammalian histone H1 nomenclature correlated with amino acid sequences.</title>
        <authorList>
            <person name="Parseghian M.H."/>
            <person name="Henschen A.H."/>
            <person name="Krieglstein K.G."/>
            <person name="Hamkalo B.A."/>
        </authorList>
    </citation>
    <scope>NOMENCLATURE</scope>
</reference>
<evidence type="ECO:0000250" key="1"/>
<evidence type="ECO:0000250" key="2">
    <source>
        <dbReference type="UniProtKB" id="D4A3K5"/>
    </source>
</evidence>
<evidence type="ECO:0000250" key="3">
    <source>
        <dbReference type="UniProtKB" id="P43275"/>
    </source>
</evidence>
<evidence type="ECO:0000250" key="4">
    <source>
        <dbReference type="UniProtKB" id="P43277"/>
    </source>
</evidence>
<evidence type="ECO:0000250" key="5">
    <source>
        <dbReference type="UniProtKB" id="Q02539"/>
    </source>
</evidence>
<evidence type="ECO:0000255" key="6">
    <source>
        <dbReference type="PROSITE-ProRule" id="PRU00837"/>
    </source>
</evidence>
<evidence type="ECO:0000256" key="7">
    <source>
        <dbReference type="SAM" id="MobiDB-lite"/>
    </source>
</evidence>
<evidence type="ECO:0000269" key="8">
    <source>
    </source>
</evidence>
<dbReference type="EMBL" id="DAAA02055502">
    <property type="status" value="NOT_ANNOTATED_CDS"/>
    <property type="molecule type" value="Genomic_DNA"/>
</dbReference>
<dbReference type="RefSeq" id="XP_010816821.1">
    <property type="nucleotide sequence ID" value="XM_010818519.4"/>
</dbReference>
<dbReference type="RefSeq" id="XP_010823721.1">
    <property type="nucleotide sequence ID" value="XM_010825419.2"/>
</dbReference>
<dbReference type="SMR" id="G3N131"/>
<dbReference type="BioGRID" id="545757">
    <property type="interactions" value="4"/>
</dbReference>
<dbReference type="FunCoup" id="G3N131">
    <property type="interactions" value="256"/>
</dbReference>
<dbReference type="iPTMnet" id="G3N131"/>
<dbReference type="PaxDb" id="9913-ENSBTAP00000055553"/>
<dbReference type="Ensembl" id="ENSBTAT00000125996.1">
    <property type="protein sequence ID" value="ENSBTAP00000082130.1"/>
    <property type="gene ID" value="ENSBTAG00000059303.1"/>
</dbReference>
<dbReference type="GeneID" id="618164"/>
<dbReference type="KEGG" id="bta:618164"/>
<dbReference type="CTD" id="3024"/>
<dbReference type="eggNOG" id="KOG4012">
    <property type="taxonomic scope" value="Eukaryota"/>
</dbReference>
<dbReference type="GeneTree" id="ENSGT00940000163269"/>
<dbReference type="HOGENOM" id="CLU_052897_7_0_1"/>
<dbReference type="InParanoid" id="G3N131"/>
<dbReference type="OrthoDB" id="9634976at2759"/>
<dbReference type="TreeFam" id="TF313664"/>
<dbReference type="Proteomes" id="UP000009136">
    <property type="component" value="Chromosome 23"/>
</dbReference>
<dbReference type="GO" id="GO:0009986">
    <property type="term" value="C:cell surface"/>
    <property type="evidence" value="ECO:0007669"/>
    <property type="project" value="Ensembl"/>
</dbReference>
<dbReference type="GO" id="GO:0000791">
    <property type="term" value="C:euchromatin"/>
    <property type="evidence" value="ECO:0000318"/>
    <property type="project" value="GO_Central"/>
</dbReference>
<dbReference type="GO" id="GO:0005654">
    <property type="term" value="C:nucleoplasm"/>
    <property type="evidence" value="ECO:0007669"/>
    <property type="project" value="Ensembl"/>
</dbReference>
<dbReference type="GO" id="GO:0000786">
    <property type="term" value="C:nucleosome"/>
    <property type="evidence" value="ECO:0007669"/>
    <property type="project" value="InterPro"/>
</dbReference>
<dbReference type="GO" id="GO:0005634">
    <property type="term" value="C:nucleus"/>
    <property type="evidence" value="ECO:0000318"/>
    <property type="project" value="GO_Central"/>
</dbReference>
<dbReference type="GO" id="GO:0031982">
    <property type="term" value="C:vesicle"/>
    <property type="evidence" value="ECO:0007669"/>
    <property type="project" value="Ensembl"/>
</dbReference>
<dbReference type="GO" id="GO:0003690">
    <property type="term" value="F:double-stranded DNA binding"/>
    <property type="evidence" value="ECO:0000318"/>
    <property type="project" value="GO_Central"/>
</dbReference>
<dbReference type="GO" id="GO:0008201">
    <property type="term" value="F:heparin binding"/>
    <property type="evidence" value="ECO:0007669"/>
    <property type="project" value="Ensembl"/>
</dbReference>
<dbReference type="GO" id="GO:0031492">
    <property type="term" value="F:nucleosomal DNA binding"/>
    <property type="evidence" value="ECO:0000318"/>
    <property type="project" value="GO_Central"/>
</dbReference>
<dbReference type="GO" id="GO:0030527">
    <property type="term" value="F:structural constituent of chromatin"/>
    <property type="evidence" value="ECO:0007669"/>
    <property type="project" value="InterPro"/>
</dbReference>
<dbReference type="GO" id="GO:0030261">
    <property type="term" value="P:chromosome condensation"/>
    <property type="evidence" value="ECO:0000318"/>
    <property type="project" value="GO_Central"/>
</dbReference>
<dbReference type="GO" id="GO:0045910">
    <property type="term" value="P:negative regulation of DNA recombination"/>
    <property type="evidence" value="ECO:0000318"/>
    <property type="project" value="GO_Central"/>
</dbReference>
<dbReference type="GO" id="GO:0006334">
    <property type="term" value="P:nucleosome assembly"/>
    <property type="evidence" value="ECO:0007669"/>
    <property type="project" value="InterPro"/>
</dbReference>
<dbReference type="GO" id="GO:0048260">
    <property type="term" value="P:positive regulation of receptor-mediated endocytosis"/>
    <property type="evidence" value="ECO:0007669"/>
    <property type="project" value="Ensembl"/>
</dbReference>
<dbReference type="GO" id="GO:0007283">
    <property type="term" value="P:spermatogenesis"/>
    <property type="evidence" value="ECO:0000318"/>
    <property type="project" value="GO_Central"/>
</dbReference>
<dbReference type="CDD" id="cd00073">
    <property type="entry name" value="H15"/>
    <property type="match status" value="1"/>
</dbReference>
<dbReference type="FunFam" id="1.10.10.10:FF:000075">
    <property type="entry name" value="Histone H1 like"/>
    <property type="match status" value="1"/>
</dbReference>
<dbReference type="Gene3D" id="1.10.10.10">
    <property type="entry name" value="Winged helix-like DNA-binding domain superfamily/Winged helix DNA-binding domain"/>
    <property type="match status" value="1"/>
</dbReference>
<dbReference type="InterPro" id="IPR005819">
    <property type="entry name" value="H1/H5"/>
</dbReference>
<dbReference type="InterPro" id="IPR005818">
    <property type="entry name" value="Histone_H1/H5_H15"/>
</dbReference>
<dbReference type="InterPro" id="IPR036388">
    <property type="entry name" value="WH-like_DNA-bd_sf"/>
</dbReference>
<dbReference type="InterPro" id="IPR036390">
    <property type="entry name" value="WH_DNA-bd_sf"/>
</dbReference>
<dbReference type="Pfam" id="PF00538">
    <property type="entry name" value="Linker_histone"/>
    <property type="match status" value="1"/>
</dbReference>
<dbReference type="PRINTS" id="PR00624">
    <property type="entry name" value="HISTONEH5"/>
</dbReference>
<dbReference type="SMART" id="SM00526">
    <property type="entry name" value="H15"/>
    <property type="match status" value="1"/>
</dbReference>
<dbReference type="SUPFAM" id="SSF46785">
    <property type="entry name" value="Winged helix' DNA-binding domain"/>
    <property type="match status" value="1"/>
</dbReference>
<dbReference type="PROSITE" id="PS51504">
    <property type="entry name" value="H15"/>
    <property type="match status" value="1"/>
</dbReference>
<keyword id="KW-0007">Acetylation</keyword>
<keyword id="KW-0158">Chromosome</keyword>
<keyword id="KW-0164">Citrullination</keyword>
<keyword id="KW-0238">DNA-binding</keyword>
<keyword id="KW-0379">Hydroxylation</keyword>
<keyword id="KW-0539">Nucleus</keyword>
<keyword id="KW-0597">Phosphoprotein</keyword>
<keyword id="KW-1185">Reference proteome</keyword>
<comment type="function">
    <text evidence="1">H1 histones bind to linker DNA between nucleosomes forming the macromolecular structure known as the chromatin fiber. H1 histones are necessary for the condensation of nucleosome chains into higher-order structured fibers. Also acts as a regulator of individual gene transcription through chromatin remodeling (By similarity).</text>
</comment>
<comment type="subunit">
    <text evidence="1">Interacts with DFFB.</text>
</comment>
<comment type="subcellular location">
    <subcellularLocation>
        <location evidence="6">Nucleus</location>
    </subcellularLocation>
    <subcellularLocation>
        <location evidence="6">Chromosome</location>
    </subcellularLocation>
    <text evidence="1">Mainly localizes in euchromatin.</text>
</comment>
<comment type="domain">
    <text evidence="1">The C-terminal domain is required for high-affinity binding to chromatin.</text>
</comment>
<comment type="PTM">
    <text evidence="3">H1 histones are progressively phosphorylated during the cell cycle, becoming maximally phosphorylated during late G2 phase and M phase, and being dephosphorylated sharply thereafter.</text>
</comment>
<comment type="PTM">
    <text evidence="3">Citrullination at Arg-57 (H1R54ci) by PADI4 takes place within the DNA-binding site of H1 and results in its displacement from chromatin and global chromatin decondensation, thereby promoting pluripotency and stem cell maintenance.</text>
</comment>
<comment type="similarity">
    <text evidence="6">Belongs to the histone H1/H5 family.</text>
</comment>
<gene>
    <name evidence="5" type="primary">H1-1</name>
    <name type="synonym">HIST1H1A</name>
</gene>
<protein>
    <recommendedName>
        <fullName>Histone H1.1</fullName>
    </recommendedName>
    <alternativeName>
        <fullName>Histone H1a</fullName>
    </alternativeName>
</protein>
<name>H11_BOVIN</name>
<proteinExistence type="evidence at protein level"/>
<sequence>MSEVALPAPAASTSPEKPSAGKKAKKPAKAAAAAKKKPAGPSVSELIVQAVSSSKERSGVSLAALKKALAAAGYDVEKNNSRIKLGLKSLVGKGTLVQTKGTGASGSFKLNKKVASVDAKPTATKVATKTKVTSASKKPKKASGAAAAKKSVKTPKKARKSVLTKKSSKSPKKPKAVKPKKVAKSPAKAKAVKPKGAKVKVTKPKTAAKPKKAAPKKK</sequence>
<accession>G3N131</accession>